<name>NUOB_SHIF8</name>
<dbReference type="EC" id="7.1.1.-" evidence="1"/>
<dbReference type="EMBL" id="CP000266">
    <property type="protein sequence ID" value="ABF04465.1"/>
    <property type="molecule type" value="Genomic_DNA"/>
</dbReference>
<dbReference type="RefSeq" id="WP_000386733.1">
    <property type="nucleotide sequence ID" value="NC_008258.1"/>
</dbReference>
<dbReference type="SMR" id="Q0T2K0"/>
<dbReference type="GeneID" id="93774887"/>
<dbReference type="KEGG" id="sfv:SFV_2354"/>
<dbReference type="HOGENOM" id="CLU_055737_7_3_6"/>
<dbReference type="Proteomes" id="UP000000659">
    <property type="component" value="Chromosome"/>
</dbReference>
<dbReference type="GO" id="GO:0005886">
    <property type="term" value="C:plasma membrane"/>
    <property type="evidence" value="ECO:0007669"/>
    <property type="project" value="UniProtKB-SubCell"/>
</dbReference>
<dbReference type="GO" id="GO:0045271">
    <property type="term" value="C:respiratory chain complex I"/>
    <property type="evidence" value="ECO:0007669"/>
    <property type="project" value="TreeGrafter"/>
</dbReference>
<dbReference type="GO" id="GO:0051539">
    <property type="term" value="F:4 iron, 4 sulfur cluster binding"/>
    <property type="evidence" value="ECO:0007669"/>
    <property type="project" value="UniProtKB-KW"/>
</dbReference>
<dbReference type="GO" id="GO:0005506">
    <property type="term" value="F:iron ion binding"/>
    <property type="evidence" value="ECO:0007669"/>
    <property type="project" value="UniProtKB-UniRule"/>
</dbReference>
<dbReference type="GO" id="GO:0008137">
    <property type="term" value="F:NADH dehydrogenase (ubiquinone) activity"/>
    <property type="evidence" value="ECO:0007669"/>
    <property type="project" value="InterPro"/>
</dbReference>
<dbReference type="GO" id="GO:0050136">
    <property type="term" value="F:NADH:ubiquinone reductase (non-electrogenic) activity"/>
    <property type="evidence" value="ECO:0007669"/>
    <property type="project" value="UniProtKB-UniRule"/>
</dbReference>
<dbReference type="GO" id="GO:0048038">
    <property type="term" value="F:quinone binding"/>
    <property type="evidence" value="ECO:0007669"/>
    <property type="project" value="UniProtKB-KW"/>
</dbReference>
<dbReference type="GO" id="GO:0009060">
    <property type="term" value="P:aerobic respiration"/>
    <property type="evidence" value="ECO:0007669"/>
    <property type="project" value="TreeGrafter"/>
</dbReference>
<dbReference type="GO" id="GO:0015990">
    <property type="term" value="P:electron transport coupled proton transport"/>
    <property type="evidence" value="ECO:0007669"/>
    <property type="project" value="TreeGrafter"/>
</dbReference>
<dbReference type="FunFam" id="3.40.50.12280:FF:000002">
    <property type="entry name" value="NADH-quinone oxidoreductase subunit B"/>
    <property type="match status" value="1"/>
</dbReference>
<dbReference type="Gene3D" id="3.40.50.12280">
    <property type="match status" value="1"/>
</dbReference>
<dbReference type="HAMAP" id="MF_01356">
    <property type="entry name" value="NDH1_NuoB"/>
    <property type="match status" value="1"/>
</dbReference>
<dbReference type="InterPro" id="IPR006137">
    <property type="entry name" value="NADH_UbQ_OxRdtase-like_20kDa"/>
</dbReference>
<dbReference type="InterPro" id="IPR006138">
    <property type="entry name" value="NADH_UQ_OxRdtase_20Kd_su"/>
</dbReference>
<dbReference type="NCBIfam" id="TIGR01957">
    <property type="entry name" value="nuoB_fam"/>
    <property type="match status" value="1"/>
</dbReference>
<dbReference type="NCBIfam" id="NF005012">
    <property type="entry name" value="PRK06411.1"/>
    <property type="match status" value="1"/>
</dbReference>
<dbReference type="PANTHER" id="PTHR11995">
    <property type="entry name" value="NADH DEHYDROGENASE"/>
    <property type="match status" value="1"/>
</dbReference>
<dbReference type="PANTHER" id="PTHR11995:SF14">
    <property type="entry name" value="NADH DEHYDROGENASE [UBIQUINONE] IRON-SULFUR PROTEIN 7, MITOCHONDRIAL"/>
    <property type="match status" value="1"/>
</dbReference>
<dbReference type="Pfam" id="PF01058">
    <property type="entry name" value="Oxidored_q6"/>
    <property type="match status" value="1"/>
</dbReference>
<dbReference type="SUPFAM" id="SSF56770">
    <property type="entry name" value="HydA/Nqo6-like"/>
    <property type="match status" value="1"/>
</dbReference>
<dbReference type="PROSITE" id="PS01150">
    <property type="entry name" value="COMPLEX1_20K"/>
    <property type="match status" value="1"/>
</dbReference>
<protein>
    <recommendedName>
        <fullName evidence="1">NADH-quinone oxidoreductase subunit B</fullName>
        <ecNumber evidence="1">7.1.1.-</ecNumber>
    </recommendedName>
    <alternativeName>
        <fullName evidence="1">NADH dehydrogenase I subunit B</fullName>
    </alternativeName>
    <alternativeName>
        <fullName evidence="1">NDH-1 subunit B</fullName>
    </alternativeName>
</protein>
<reference key="1">
    <citation type="journal article" date="2006" name="BMC Genomics">
        <title>Complete genome sequence of Shigella flexneri 5b and comparison with Shigella flexneri 2a.</title>
        <authorList>
            <person name="Nie H."/>
            <person name="Yang F."/>
            <person name="Zhang X."/>
            <person name="Yang J."/>
            <person name="Chen L."/>
            <person name="Wang J."/>
            <person name="Xiong Z."/>
            <person name="Peng J."/>
            <person name="Sun L."/>
            <person name="Dong J."/>
            <person name="Xue Y."/>
            <person name="Xu X."/>
            <person name="Chen S."/>
            <person name="Yao Z."/>
            <person name="Shen Y."/>
            <person name="Jin Q."/>
        </authorList>
    </citation>
    <scope>NUCLEOTIDE SEQUENCE [LARGE SCALE GENOMIC DNA]</scope>
    <source>
        <strain>8401</strain>
    </source>
</reference>
<gene>
    <name evidence="1" type="primary">nuoB</name>
    <name type="ordered locus">SFV_2354</name>
</gene>
<accession>Q0T2K0</accession>
<organism>
    <name type="scientific">Shigella flexneri serotype 5b (strain 8401)</name>
    <dbReference type="NCBI Taxonomy" id="373384"/>
    <lineage>
        <taxon>Bacteria</taxon>
        <taxon>Pseudomonadati</taxon>
        <taxon>Pseudomonadota</taxon>
        <taxon>Gammaproteobacteria</taxon>
        <taxon>Enterobacterales</taxon>
        <taxon>Enterobacteriaceae</taxon>
        <taxon>Shigella</taxon>
    </lineage>
</organism>
<feature type="chain" id="PRO_0000376378" description="NADH-quinone oxidoreductase subunit B">
    <location>
        <begin position="1"/>
        <end position="220"/>
    </location>
</feature>
<feature type="binding site" evidence="1">
    <location>
        <position position="63"/>
    </location>
    <ligand>
        <name>[4Fe-4S] cluster</name>
        <dbReference type="ChEBI" id="CHEBI:49883"/>
    </ligand>
</feature>
<feature type="binding site" evidence="1">
    <location>
        <position position="64"/>
    </location>
    <ligand>
        <name>[4Fe-4S] cluster</name>
        <dbReference type="ChEBI" id="CHEBI:49883"/>
    </ligand>
</feature>
<feature type="binding site" evidence="1">
    <location>
        <position position="129"/>
    </location>
    <ligand>
        <name>[4Fe-4S] cluster</name>
        <dbReference type="ChEBI" id="CHEBI:49883"/>
    </ligand>
</feature>
<feature type="binding site" evidence="1">
    <location>
        <position position="158"/>
    </location>
    <ligand>
        <name>[4Fe-4S] cluster</name>
        <dbReference type="ChEBI" id="CHEBI:49883"/>
    </ligand>
</feature>
<keyword id="KW-0004">4Fe-4S</keyword>
<keyword id="KW-0997">Cell inner membrane</keyword>
<keyword id="KW-1003">Cell membrane</keyword>
<keyword id="KW-0408">Iron</keyword>
<keyword id="KW-0411">Iron-sulfur</keyword>
<keyword id="KW-0472">Membrane</keyword>
<keyword id="KW-0479">Metal-binding</keyword>
<keyword id="KW-0520">NAD</keyword>
<keyword id="KW-0874">Quinone</keyword>
<keyword id="KW-1278">Translocase</keyword>
<keyword id="KW-0813">Transport</keyword>
<keyword id="KW-0830">Ubiquinone</keyword>
<proteinExistence type="inferred from homology"/>
<comment type="function">
    <text evidence="1">NDH-1 shuttles electrons from NADH, via FMN and iron-sulfur (Fe-S) centers, to quinones in the respiratory chain. The immediate electron acceptor for the enzyme in this species is believed to be ubiquinone. Couples the redox reaction to proton translocation (for every two electrons transferred, four hydrogen ions are translocated across the cytoplasmic membrane), and thus conserves the redox energy in a proton gradient.</text>
</comment>
<comment type="catalytic activity">
    <reaction evidence="1">
        <text>a quinone + NADH + 5 H(+)(in) = a quinol + NAD(+) + 4 H(+)(out)</text>
        <dbReference type="Rhea" id="RHEA:57888"/>
        <dbReference type="ChEBI" id="CHEBI:15378"/>
        <dbReference type="ChEBI" id="CHEBI:24646"/>
        <dbReference type="ChEBI" id="CHEBI:57540"/>
        <dbReference type="ChEBI" id="CHEBI:57945"/>
        <dbReference type="ChEBI" id="CHEBI:132124"/>
    </reaction>
</comment>
<comment type="cofactor">
    <cofactor evidence="1">
        <name>[4Fe-4S] cluster</name>
        <dbReference type="ChEBI" id="CHEBI:49883"/>
    </cofactor>
    <text evidence="1">Binds 1 [4Fe-4S] cluster.</text>
</comment>
<comment type="subunit">
    <text evidence="1">NDH-1 is composed of 13 different subunits. Subunits NuoB, CD, E, F, and G constitute the peripheral sector of the complex.</text>
</comment>
<comment type="subcellular location">
    <subcellularLocation>
        <location evidence="1">Cell inner membrane</location>
        <topology evidence="1">Peripheral membrane protein</topology>
        <orientation evidence="1">Cytoplasmic side</orientation>
    </subcellularLocation>
</comment>
<comment type="similarity">
    <text evidence="1">Belongs to the complex I 20 kDa subunit family.</text>
</comment>
<evidence type="ECO:0000255" key="1">
    <source>
        <dbReference type="HAMAP-Rule" id="MF_01356"/>
    </source>
</evidence>
<sequence>MDYTLTRIDPNGENDRYPLQKQEIVTDPLEQEVNKNVFMGKLNDMVNWGRKNSIWPYNFGLSCCYVEMVTSFTAVHDVARFGAEVLRASPRQADLMVVAGTCFTKMAPVIQRLYDQMLEPKWVISMGACANSGGMYDIYSVVQGVDKFIPVDVYIPGCPPRPEAYMQALMLLQESIGKERRPLSWVVGDQGVYRANMQSERERKRGERIAVTNLRTPDEI</sequence>